<comment type="function">
    <text>The enzymatic degradation of amino acids in cheese is believed to generate aroma compounds and therefore to be essential for flavor development. Cystathionine beta-lyase (CBL) can convert cystathionine to homocysteine but is also able to catalyze an alpha, gamma elimination. With methionine as a substrate, it produces volatile sulfur compounds which are important for flavor formation in Gouda cheese.</text>
</comment>
<comment type="catalytic activity">
    <reaction>
        <text>L,L-cystathionine + H2O = L-homocysteine + pyruvate + NH4(+)</text>
        <dbReference type="Rhea" id="RHEA:13965"/>
        <dbReference type="ChEBI" id="CHEBI:15361"/>
        <dbReference type="ChEBI" id="CHEBI:15377"/>
        <dbReference type="ChEBI" id="CHEBI:28938"/>
        <dbReference type="ChEBI" id="CHEBI:58161"/>
        <dbReference type="ChEBI" id="CHEBI:58199"/>
    </reaction>
</comment>
<comment type="catalytic activity">
    <reaction>
        <text>an S-substituted L-cysteine + H2O = a thiol + pyruvate + NH4(+)</text>
        <dbReference type="Rhea" id="RHEA:18121"/>
        <dbReference type="ChEBI" id="CHEBI:15361"/>
        <dbReference type="ChEBI" id="CHEBI:15377"/>
        <dbReference type="ChEBI" id="CHEBI:28938"/>
        <dbReference type="ChEBI" id="CHEBI:29256"/>
        <dbReference type="ChEBI" id="CHEBI:58717"/>
        <dbReference type="EC" id="4.4.1.13"/>
    </reaction>
</comment>
<comment type="cofactor">
    <cofactor evidence="1">
        <name>pyridoxal 5'-phosphate</name>
        <dbReference type="ChEBI" id="CHEBI:597326"/>
    </cofactor>
</comment>
<comment type="pathway">
    <text>Amino-acid biosynthesis; L-methionine biosynthesis via de novo pathway; L-homocysteine from L-cystathionine: step 1/1.</text>
</comment>
<comment type="subcellular location">
    <subcellularLocation>
        <location>Cytoplasm</location>
    </subcellularLocation>
</comment>
<comment type="similarity">
    <text evidence="2">Belongs to the trans-sulfuration enzymes family.</text>
</comment>
<accession>P0A4K2</accession>
<accession>Q9RAS7</accession>
<accession>Q9RAS9</accession>
<reference key="1">
    <citation type="journal article" date="2001" name="Genome Res.">
        <title>The complete genome sequence of the lactic acid bacterium Lactococcus lactis ssp. lactis IL1403.</title>
        <authorList>
            <person name="Bolotin A."/>
            <person name="Wincker P."/>
            <person name="Mauger S."/>
            <person name="Jaillon O."/>
            <person name="Malarme K."/>
            <person name="Weissenbach J."/>
            <person name="Ehrlich S.D."/>
            <person name="Sorokin A."/>
        </authorList>
    </citation>
    <scope>NUCLEOTIDE SEQUENCE [LARGE SCALE GENOMIC DNA]</scope>
    <source>
        <strain>IL1403</strain>
    </source>
</reference>
<protein>
    <recommendedName>
        <fullName>Cystathionine beta-lyase</fullName>
        <shortName>CBL</shortName>
        <ecNumber>4.4.1.13</ecNumber>
    </recommendedName>
    <alternativeName>
        <fullName>Beta-cystathionase</fullName>
    </alternativeName>
    <alternativeName>
        <fullName>Cysteine lyase</fullName>
    </alternativeName>
    <alternativeName>
        <fullName>Cysteine-S-conjugate beta-lyase</fullName>
    </alternativeName>
</protein>
<evidence type="ECO:0000250" key="1"/>
<evidence type="ECO:0000305" key="2"/>
<keyword id="KW-0028">Amino-acid biosynthesis</keyword>
<keyword id="KW-0963">Cytoplasm</keyword>
<keyword id="KW-0456">Lyase</keyword>
<keyword id="KW-0486">Methionine biosynthesis</keyword>
<keyword id="KW-0663">Pyridoxal phosphate</keyword>
<keyword id="KW-1185">Reference proteome</keyword>
<dbReference type="EC" id="4.4.1.13"/>
<dbReference type="EMBL" id="AE005176">
    <property type="protein sequence ID" value="AAK04879.1"/>
    <property type="molecule type" value="Genomic_DNA"/>
</dbReference>
<dbReference type="PIR" id="E86722">
    <property type="entry name" value="E86722"/>
</dbReference>
<dbReference type="RefSeq" id="NP_266937.1">
    <property type="nucleotide sequence ID" value="NC_002662.1"/>
</dbReference>
<dbReference type="RefSeq" id="WP_010905558.1">
    <property type="nucleotide sequence ID" value="NC_002662.1"/>
</dbReference>
<dbReference type="SMR" id="P0A4K2"/>
<dbReference type="PaxDb" id="272623-L0181"/>
<dbReference type="EnsemblBacteria" id="AAK04879">
    <property type="protein sequence ID" value="AAK04879"/>
    <property type="gene ID" value="L0181"/>
</dbReference>
<dbReference type="KEGG" id="lla:L0181"/>
<dbReference type="PATRIC" id="fig|272623.7.peg.836"/>
<dbReference type="eggNOG" id="COG0626">
    <property type="taxonomic scope" value="Bacteria"/>
</dbReference>
<dbReference type="HOGENOM" id="CLU_018986_2_0_9"/>
<dbReference type="OrthoDB" id="9780685at2"/>
<dbReference type="UniPathway" id="UPA00051">
    <property type="reaction ID" value="UER00078"/>
</dbReference>
<dbReference type="Proteomes" id="UP000002196">
    <property type="component" value="Chromosome"/>
</dbReference>
<dbReference type="GO" id="GO:0005737">
    <property type="term" value="C:cytoplasm"/>
    <property type="evidence" value="ECO:0007669"/>
    <property type="project" value="UniProtKB-SubCell"/>
</dbReference>
<dbReference type="GO" id="GO:0004123">
    <property type="term" value="F:cystathionine gamma-lyase activity"/>
    <property type="evidence" value="ECO:0007669"/>
    <property type="project" value="TreeGrafter"/>
</dbReference>
<dbReference type="GO" id="GO:0003962">
    <property type="term" value="F:cystathionine gamma-synthase activity"/>
    <property type="evidence" value="ECO:0007669"/>
    <property type="project" value="TreeGrafter"/>
</dbReference>
<dbReference type="GO" id="GO:0047804">
    <property type="term" value="F:cysteine-S-conjugate beta-lyase activity"/>
    <property type="evidence" value="ECO:0007669"/>
    <property type="project" value="UniProtKB-EC"/>
</dbReference>
<dbReference type="GO" id="GO:0030170">
    <property type="term" value="F:pyridoxal phosphate binding"/>
    <property type="evidence" value="ECO:0007669"/>
    <property type="project" value="InterPro"/>
</dbReference>
<dbReference type="GO" id="GO:0019343">
    <property type="term" value="P:cysteine biosynthetic process via cystathionine"/>
    <property type="evidence" value="ECO:0007669"/>
    <property type="project" value="TreeGrafter"/>
</dbReference>
<dbReference type="GO" id="GO:0009086">
    <property type="term" value="P:methionine biosynthetic process"/>
    <property type="evidence" value="ECO:0007669"/>
    <property type="project" value="UniProtKB-KW"/>
</dbReference>
<dbReference type="GO" id="GO:0019346">
    <property type="term" value="P:transsulfuration"/>
    <property type="evidence" value="ECO:0007669"/>
    <property type="project" value="InterPro"/>
</dbReference>
<dbReference type="CDD" id="cd00614">
    <property type="entry name" value="CGS_like"/>
    <property type="match status" value="1"/>
</dbReference>
<dbReference type="FunFam" id="3.90.1150.10:FF:000008">
    <property type="entry name" value="Cystathionine gamma-synthase"/>
    <property type="match status" value="1"/>
</dbReference>
<dbReference type="FunFam" id="3.40.640.10:FF:000009">
    <property type="entry name" value="Cystathionine gamma-synthase homolog"/>
    <property type="match status" value="1"/>
</dbReference>
<dbReference type="Gene3D" id="3.90.1150.10">
    <property type="entry name" value="Aspartate Aminotransferase, domain 1"/>
    <property type="match status" value="1"/>
</dbReference>
<dbReference type="Gene3D" id="3.40.640.10">
    <property type="entry name" value="Type I PLP-dependent aspartate aminotransferase-like (Major domain)"/>
    <property type="match status" value="1"/>
</dbReference>
<dbReference type="InterPro" id="IPR000277">
    <property type="entry name" value="Cys/Met-Metab_PyrdxlP-dep_enz"/>
</dbReference>
<dbReference type="InterPro" id="IPR054542">
    <property type="entry name" value="Cys_met_metab_PP"/>
</dbReference>
<dbReference type="InterPro" id="IPR015424">
    <property type="entry name" value="PyrdxlP-dep_Trfase"/>
</dbReference>
<dbReference type="InterPro" id="IPR015421">
    <property type="entry name" value="PyrdxlP-dep_Trfase_major"/>
</dbReference>
<dbReference type="InterPro" id="IPR015422">
    <property type="entry name" value="PyrdxlP-dep_Trfase_small"/>
</dbReference>
<dbReference type="NCBIfam" id="NF004821">
    <property type="entry name" value="PRK06176.1"/>
    <property type="match status" value="1"/>
</dbReference>
<dbReference type="NCBIfam" id="NF005810">
    <property type="entry name" value="PRK07671.1"/>
    <property type="match status" value="1"/>
</dbReference>
<dbReference type="NCBIfam" id="NF005871">
    <property type="entry name" value="PRK07811.1"/>
    <property type="match status" value="1"/>
</dbReference>
<dbReference type="PANTHER" id="PTHR11808:SF15">
    <property type="entry name" value="CYSTATHIONINE GAMMA-LYASE"/>
    <property type="match status" value="1"/>
</dbReference>
<dbReference type="PANTHER" id="PTHR11808">
    <property type="entry name" value="TRANS-SULFURATION ENZYME FAMILY MEMBER"/>
    <property type="match status" value="1"/>
</dbReference>
<dbReference type="Pfam" id="PF01053">
    <property type="entry name" value="Cys_Met_Meta_PP"/>
    <property type="match status" value="1"/>
</dbReference>
<dbReference type="PIRSF" id="PIRSF001434">
    <property type="entry name" value="CGS"/>
    <property type="match status" value="1"/>
</dbReference>
<dbReference type="SUPFAM" id="SSF53383">
    <property type="entry name" value="PLP-dependent transferases"/>
    <property type="match status" value="1"/>
</dbReference>
<dbReference type="PROSITE" id="PS00868">
    <property type="entry name" value="CYS_MET_METAB_PP"/>
    <property type="match status" value="1"/>
</dbReference>
<organism>
    <name type="scientific">Lactococcus lactis subsp. lactis (strain IL1403)</name>
    <name type="common">Streptococcus lactis</name>
    <dbReference type="NCBI Taxonomy" id="272623"/>
    <lineage>
        <taxon>Bacteria</taxon>
        <taxon>Bacillati</taxon>
        <taxon>Bacillota</taxon>
        <taxon>Bacilli</taxon>
        <taxon>Lactobacillales</taxon>
        <taxon>Streptococcaceae</taxon>
        <taxon>Lactococcus</taxon>
    </lineage>
</organism>
<name>METC_LACLA</name>
<feature type="chain" id="PRO_0000114772" description="Cystathionine beta-lyase">
    <location>
        <begin position="1"/>
        <end position="380"/>
    </location>
</feature>
<feature type="modified residue" description="N6-(pyridoxal phosphate)lysine" evidence="1">
    <location>
        <position position="196"/>
    </location>
</feature>
<gene>
    <name type="primary">metC</name>
    <name type="synonym">metB2</name>
    <name type="ordered locus">LL0781</name>
    <name type="ORF">L0181</name>
</gene>
<proteinExistence type="inferred from homology"/>
<sequence length="380" mass="40938">MTSIKTKVIHGGISTDKTTGAVSVPIYQTSTYKQNGLGQPKEYEYSRSGNPTRHALEELIADLEGGVQGFAFSSGLAGIHAVLSLFSAGDHIILADDVYGGTFRLMDKVLTKTGIIYDLVDLSNLDDLKAAFKEETKAIYFETPSNPLLKVLDIKEISAIAKAHDALTLVDNTFATPYLQQPIALGADIVLHSATKYLGGHSDVVAGLVTTNSKELASEIGFLQNSIGAVLGPQDSWLVQRGIKTLALRMEAHSANAQKIAEFLETSKAVSKVYYPGLNSHPGHEIAKKQMSAFGGMISFELTDENAVKDFVENLSYFTLAESLGGVESLIEVPAVMTHASIPKELREEIGIKDGLIRLSVGVEAIEDLLTDIKEALEKK</sequence>